<feature type="chain" id="PRO_0000074113" description="Guanylate cyclase soluble subunit alpha-2">
    <location>
        <begin position="1"/>
        <end position="732"/>
    </location>
</feature>
<feature type="domain" description="Guanylate cyclase" evidence="1">
    <location>
        <begin position="521"/>
        <end position="648"/>
    </location>
</feature>
<feature type="region of interest" description="Disordered" evidence="2">
    <location>
        <begin position="1"/>
        <end position="58"/>
    </location>
</feature>
<feature type="compositionally biased region" description="Low complexity" evidence="2">
    <location>
        <begin position="49"/>
        <end position="58"/>
    </location>
</feature>
<feature type="splice variant" id="VSP_054154" description="In isoform 3." evidence="4">
    <original>K</original>
    <variation>KSKHVTEGHLTQLSVAGFNSLE</variation>
    <location>
        <position position="402"/>
    </location>
</feature>
<feature type="splice variant" id="VSP_001814" description="In isoform 2." evidence="5">
    <original>Q</original>
    <variation>QPQRSELLFSFPVSIQLVPDQHQSETDLGTEK</variation>
    <location>
        <position position="612"/>
    </location>
</feature>
<feature type="sequence variant" id="VAR_036420" description="In a colorectal cancer sample; somatic mutation." evidence="3">
    <original>E</original>
    <variation>V</variation>
    <location>
        <position position="681"/>
    </location>
</feature>
<feature type="sequence variant" id="VAR_036421" description="In a colorectal cancer sample; somatic mutation." evidence="3">
    <original>N</original>
    <variation>T</variation>
    <location>
        <position position="685"/>
    </location>
</feature>
<protein>
    <recommendedName>
        <fullName>Guanylate cyclase soluble subunit alpha-2</fullName>
        <shortName>GCS-alpha-2</shortName>
        <ecNumber>4.6.1.2</ecNumber>
    </recommendedName>
</protein>
<evidence type="ECO:0000255" key="1">
    <source>
        <dbReference type="PROSITE-ProRule" id="PRU00099"/>
    </source>
</evidence>
<evidence type="ECO:0000256" key="2">
    <source>
        <dbReference type="SAM" id="MobiDB-lite"/>
    </source>
</evidence>
<evidence type="ECO:0000269" key="3">
    <source>
    </source>
</evidence>
<evidence type="ECO:0000303" key="4">
    <source>
    </source>
</evidence>
<evidence type="ECO:0000303" key="5">
    <source>
    </source>
</evidence>
<keyword id="KW-0025">Alternative splicing</keyword>
<keyword id="KW-0141">cGMP biosynthesis</keyword>
<keyword id="KW-0963">Cytoplasm</keyword>
<keyword id="KW-0342">GTP-binding</keyword>
<keyword id="KW-0456">Lyase</keyword>
<keyword id="KW-0547">Nucleotide-binding</keyword>
<keyword id="KW-1267">Proteomics identification</keyword>
<keyword id="KW-1185">Reference proteome</keyword>
<comment type="function">
    <text>Has guanylyl cyclase on binding to the beta-1 subunit.</text>
</comment>
<comment type="function">
    <text>Isoform 2 acts as a negative regulator of guanylyl cyclase activity as it forms non-functional heterodimers with the beta subunits.</text>
</comment>
<comment type="catalytic activity">
    <reaction>
        <text>GTP = 3',5'-cyclic GMP + diphosphate</text>
        <dbReference type="Rhea" id="RHEA:13665"/>
        <dbReference type="ChEBI" id="CHEBI:33019"/>
        <dbReference type="ChEBI" id="CHEBI:37565"/>
        <dbReference type="ChEBI" id="CHEBI:57746"/>
        <dbReference type="EC" id="4.6.1.2"/>
    </reaction>
</comment>
<comment type="activity regulation">
    <text>Activated by nitric oxide in the presence of magnesium or manganese ions.</text>
</comment>
<comment type="subunit">
    <text>Heterodimer of an alpha and a beta chain.</text>
</comment>
<comment type="interaction">
    <interactant intactId="EBI-6911715">
        <id>P33402</id>
    </interactant>
    <interactant intactId="EBI-357481">
        <id>Q12959</id>
        <label>DLG1</label>
    </interactant>
    <organismsDiffer>false</organismsDiffer>
    <experiments>2</experiments>
</comment>
<comment type="interaction">
    <interactant intactId="EBI-6911715">
        <id>P33402</id>
    </interactant>
    <interactant intactId="EBI-19954058">
        <id>O15499</id>
        <label>GSC2</label>
    </interactant>
    <organismsDiffer>false</organismsDiffer>
    <experiments>3</experiments>
</comment>
<comment type="interaction">
    <interactant intactId="EBI-6911715">
        <id>P33402</id>
    </interactant>
    <interactant intactId="EBI-357345">
        <id>Q14160</id>
        <label>SCRIB</label>
    </interactant>
    <organismsDiffer>false</organismsDiffer>
    <experiments>6</experiments>
</comment>
<comment type="subcellular location">
    <subcellularLocation>
        <location>Cytoplasm</location>
    </subcellularLocation>
</comment>
<comment type="alternative products">
    <event type="alternative splicing"/>
    <isoform>
        <id>P33402-1</id>
        <name>1</name>
        <name>Alpha-2</name>
        <sequence type="displayed"/>
    </isoform>
    <isoform>
        <id>P33402-2</id>
        <name>2</name>
        <name>Alpha-2-I</name>
        <sequence type="described" ref="VSP_001814"/>
    </isoform>
    <isoform>
        <id>P33402-3</id>
        <name>3</name>
        <sequence type="described" ref="VSP_054154"/>
    </isoform>
</comment>
<comment type="tissue specificity">
    <text>Isoform 1 is expressed in fetal brain, liver, colon, endothelium and testis. Isoform 2 is expressed only in liver, colon and endothelium.</text>
</comment>
<comment type="miscellaneous">
    <text>There are two types of guanylate cyclases: soluble forms and membrane-associated receptor forms.</text>
</comment>
<comment type="similarity">
    <text evidence="1">Belongs to the adenylyl cyclase class-4/guanylyl cyclase family.</text>
</comment>
<accession>P33402</accession>
<accession>A1L4C4</accession>
<accession>B7ZLT5</accession>
<sequence length="732" mass="81750">MSRRKISSESFSSLGSDYLETSPEEEGECPLSRLCWNGSRSPPGPLEPSPAAAAAAAAPAPTPAASAAAAAATAGARRVQRRRRVNLDSLGESISRLTAPSPQTIQQTLKRTLQYYEHQVIGYRDAEKNFHNISNRCSYADHSNKEEIEDVSGILQCTANILGLKFEEIQKRFGEEFFNICFHENERVLRAVGGTLQDFFNGFDALLEHIRTSFGKQATLESPSFLCKELPEGTLMLHYFHPHHIVGFAMLGMIKAAGKKIYRLDVEVEQVANEKLCSDVSNPGNCSCLTFLIKECENTNIMKNLPQGTSQVPADLRISINTFCRAFPFHLMFDPSMSVLQLGEGLRKQLRCDTHKVLKFEDCFEIVSPKVNATFERVLLRLSTPFVIRTKPEASGSENKDKVMEVKGQMIHVPESNSILFLGSPCVDKLDELMGRGLHLSDIPIHDATRDVILVGEQAKAQDGLKKRMDKLKATLERTHQALEEEKKKTVDLLYSIFPGDVAQQLWQGQQVQARKFDDVTMLFSDIVGFTAICAQCTPMQVISMLNELYTRFDHQCGFLDIYKVETIGDAYCVAAGLHRKSLCHAKPIALMALKMMELSEEVLTPDGRPIQMRIGIHSGSVLAGVVGVRMPRYCLFGNNVTLASKFESGSHPRRINVSPTTYQLLKREESFTFIPRSREELPDNFPKEIPGICYFLEVRTGPKPPKPSLSSSRIKKVSYNIGTMFLRETSL</sequence>
<gene>
    <name type="primary">GUCY1A2</name>
    <name type="synonym">GUC1A2</name>
    <name type="synonym">GUCSA2</name>
</gene>
<organism>
    <name type="scientific">Homo sapiens</name>
    <name type="common">Human</name>
    <dbReference type="NCBI Taxonomy" id="9606"/>
    <lineage>
        <taxon>Eukaryota</taxon>
        <taxon>Metazoa</taxon>
        <taxon>Chordata</taxon>
        <taxon>Craniata</taxon>
        <taxon>Vertebrata</taxon>
        <taxon>Euteleostomi</taxon>
        <taxon>Mammalia</taxon>
        <taxon>Eutheria</taxon>
        <taxon>Euarchontoglires</taxon>
        <taxon>Primates</taxon>
        <taxon>Haplorrhini</taxon>
        <taxon>Catarrhini</taxon>
        <taxon>Hominidae</taxon>
        <taxon>Homo</taxon>
    </lineage>
</organism>
<dbReference type="EC" id="4.6.1.2"/>
<dbReference type="EMBL" id="X63282">
    <property type="protein sequence ID" value="CAA44921.1"/>
    <property type="molecule type" value="mRNA"/>
</dbReference>
<dbReference type="EMBL" id="Z50053">
    <property type="protein sequence ID" value="CAA90393.1"/>
    <property type="molecule type" value="mRNA"/>
</dbReference>
<dbReference type="EMBL" id="AP001282">
    <property type="status" value="NOT_ANNOTATED_CDS"/>
    <property type="molecule type" value="Genomic_DNA"/>
</dbReference>
<dbReference type="EMBL" id="AP001881">
    <property type="status" value="NOT_ANNOTATED_CDS"/>
    <property type="molecule type" value="Genomic_DNA"/>
</dbReference>
<dbReference type="EMBL" id="AP003078">
    <property type="status" value="NOT_ANNOTATED_CDS"/>
    <property type="molecule type" value="Genomic_DNA"/>
</dbReference>
<dbReference type="EMBL" id="AP005014">
    <property type="status" value="NOT_ANNOTATED_CDS"/>
    <property type="molecule type" value="Genomic_DNA"/>
</dbReference>
<dbReference type="EMBL" id="CH471065">
    <property type="protein sequence ID" value="EAW67081.1"/>
    <property type="molecule type" value="Genomic_DNA"/>
</dbReference>
<dbReference type="EMBL" id="BC130484">
    <property type="protein sequence ID" value="AAI30485.1"/>
    <property type="molecule type" value="mRNA"/>
</dbReference>
<dbReference type="EMBL" id="BC130488">
    <property type="protein sequence ID" value="AAI30489.1"/>
    <property type="molecule type" value="mRNA"/>
</dbReference>
<dbReference type="EMBL" id="BC144033">
    <property type="protein sequence ID" value="AAI44034.1"/>
    <property type="molecule type" value="mRNA"/>
</dbReference>
<dbReference type="CCDS" id="CCDS58170.1">
    <molecule id="P33402-2"/>
</dbReference>
<dbReference type="CCDS" id="CCDS8335.1">
    <molecule id="P33402-1"/>
</dbReference>
<dbReference type="PIR" id="S18325">
    <property type="entry name" value="S18325"/>
</dbReference>
<dbReference type="RefSeq" id="NP_000846.1">
    <molecule id="P33402-1"/>
    <property type="nucleotide sequence ID" value="NM_000855.3"/>
</dbReference>
<dbReference type="RefSeq" id="NP_001243353.1">
    <molecule id="P33402-2"/>
    <property type="nucleotide sequence ID" value="NM_001256424.2"/>
</dbReference>
<dbReference type="SMR" id="P33402"/>
<dbReference type="BioGRID" id="109232">
    <property type="interactions" value="17"/>
</dbReference>
<dbReference type="ComplexPortal" id="CPX-2860">
    <property type="entry name" value="Soluble guanylate cyclase complex, SGCalpha2-SGCbeta1 variant"/>
</dbReference>
<dbReference type="CORUM" id="P33402"/>
<dbReference type="FunCoup" id="P33402">
    <property type="interactions" value="965"/>
</dbReference>
<dbReference type="IntAct" id="P33402">
    <property type="interactions" value="8"/>
</dbReference>
<dbReference type="MINT" id="P33402"/>
<dbReference type="STRING" id="9606.ENSP00000282249"/>
<dbReference type="ChEMBL" id="CHEMBL2111348"/>
<dbReference type="DrugBank" id="DB09401">
    <property type="generic name" value="Isosorbide"/>
</dbReference>
<dbReference type="DrugBank" id="DB01020">
    <property type="generic name" value="Isosorbide mononitrate"/>
</dbReference>
<dbReference type="DrugBank" id="DB13749">
    <property type="generic name" value="Magnesium gluconate"/>
</dbReference>
<dbReference type="DrugBank" id="DB09241">
    <property type="generic name" value="Methylene blue"/>
</dbReference>
<dbReference type="DrugBank" id="DB09282">
    <property type="generic name" value="Molsidomine"/>
</dbReference>
<dbReference type="DrugBank" id="DB00435">
    <property type="generic name" value="Nitric Oxide"/>
</dbReference>
<dbReference type="DrugBank" id="DB06154">
    <property type="generic name" value="Pentaerythritol tetranitrate"/>
</dbReference>
<dbReference type="DrugBank" id="DB13170">
    <property type="generic name" value="Plecanatide"/>
</dbReference>
<dbReference type="DrugBank" id="DB08931">
    <property type="generic name" value="Riociguat"/>
</dbReference>
<dbReference type="DrugCentral" id="P33402"/>
<dbReference type="GlyGen" id="P33402">
    <property type="glycosylation" value="2 sites, 1 O-linked glycan (1 site)"/>
</dbReference>
<dbReference type="iPTMnet" id="P33402"/>
<dbReference type="PhosphoSitePlus" id="P33402"/>
<dbReference type="SwissPalm" id="P33402"/>
<dbReference type="BioMuta" id="GUCY1A2"/>
<dbReference type="DMDM" id="461897"/>
<dbReference type="jPOST" id="P33402"/>
<dbReference type="MassIVE" id="P33402"/>
<dbReference type="PaxDb" id="9606-ENSP00000282249"/>
<dbReference type="PeptideAtlas" id="P33402"/>
<dbReference type="ProteomicsDB" id="54910">
    <molecule id="P33402-1"/>
</dbReference>
<dbReference type="ProteomicsDB" id="54911">
    <molecule id="P33402-2"/>
</dbReference>
<dbReference type="Antibodypedia" id="4028">
    <property type="antibodies" value="129 antibodies from 17 providers"/>
</dbReference>
<dbReference type="DNASU" id="2977"/>
<dbReference type="Ensembl" id="ENST00000282249.6">
    <molecule id="P33402-2"/>
    <property type="protein sequence ID" value="ENSP00000282249.2"/>
    <property type="gene ID" value="ENSG00000152402.11"/>
</dbReference>
<dbReference type="Ensembl" id="ENST00000347596.2">
    <molecule id="P33402-3"/>
    <property type="protein sequence ID" value="ENSP00000344874.2"/>
    <property type="gene ID" value="ENSG00000152402.11"/>
</dbReference>
<dbReference type="Ensembl" id="ENST00000526355.7">
    <molecule id="P33402-1"/>
    <property type="protein sequence ID" value="ENSP00000431245.2"/>
    <property type="gene ID" value="ENSG00000152402.11"/>
</dbReference>
<dbReference type="GeneID" id="2977"/>
<dbReference type="KEGG" id="hsa:2977"/>
<dbReference type="MANE-Select" id="ENST00000526355.7">
    <property type="protein sequence ID" value="ENSP00000431245.2"/>
    <property type="RefSeq nucleotide sequence ID" value="NM_000855.3"/>
    <property type="RefSeq protein sequence ID" value="NP_000846.1"/>
</dbReference>
<dbReference type="UCSC" id="uc001pjf.6">
    <molecule id="P33402-1"/>
    <property type="organism name" value="human"/>
</dbReference>
<dbReference type="AGR" id="HGNC:4684"/>
<dbReference type="CTD" id="2977"/>
<dbReference type="DisGeNET" id="2977"/>
<dbReference type="GeneCards" id="GUCY1A2"/>
<dbReference type="HGNC" id="HGNC:4684">
    <property type="gene designation" value="GUCY1A2"/>
</dbReference>
<dbReference type="HPA" id="ENSG00000152402">
    <property type="expression patterns" value="Tissue enhanced (placenta)"/>
</dbReference>
<dbReference type="MIM" id="601244">
    <property type="type" value="gene"/>
</dbReference>
<dbReference type="neXtProt" id="NX_P33402"/>
<dbReference type="OpenTargets" id="ENSG00000152402"/>
<dbReference type="PharmGKB" id="PA186"/>
<dbReference type="VEuPathDB" id="HostDB:ENSG00000152402"/>
<dbReference type="eggNOG" id="KOG4171">
    <property type="taxonomic scope" value="Eukaryota"/>
</dbReference>
<dbReference type="GeneTree" id="ENSGT00940000157765"/>
<dbReference type="HOGENOM" id="CLU_011614_5_0_1"/>
<dbReference type="InParanoid" id="P33402"/>
<dbReference type="OMA" id="CQEVGSE"/>
<dbReference type="OrthoDB" id="6127067at2759"/>
<dbReference type="PAN-GO" id="P33402">
    <property type="GO annotations" value="4 GO annotations based on evolutionary models"/>
</dbReference>
<dbReference type="PhylomeDB" id="P33402"/>
<dbReference type="TreeFam" id="TF351403"/>
<dbReference type="BRENDA" id="4.6.1.2">
    <property type="organism ID" value="2681"/>
</dbReference>
<dbReference type="PathwayCommons" id="P33402"/>
<dbReference type="Reactome" id="R-HSA-392154">
    <property type="pathway name" value="Nitric oxide stimulates guanylate cyclase"/>
</dbReference>
<dbReference type="Reactome" id="R-HSA-445355">
    <property type="pathway name" value="Smooth Muscle Contraction"/>
</dbReference>
<dbReference type="SignaLink" id="P33402"/>
<dbReference type="SIGNOR" id="P33402"/>
<dbReference type="BioGRID-ORCS" id="2977">
    <property type="hits" value="10 hits in 1154 CRISPR screens"/>
</dbReference>
<dbReference type="ChiTaRS" id="GUCY1A2">
    <property type="organism name" value="human"/>
</dbReference>
<dbReference type="GeneWiki" id="GUCY1A2"/>
<dbReference type="GenomeRNAi" id="2977"/>
<dbReference type="Pharos" id="P33402">
    <property type="development level" value="Tclin"/>
</dbReference>
<dbReference type="PRO" id="PR:P33402"/>
<dbReference type="Proteomes" id="UP000005640">
    <property type="component" value="Chromosome 11"/>
</dbReference>
<dbReference type="RNAct" id="P33402">
    <property type="molecule type" value="protein"/>
</dbReference>
<dbReference type="Bgee" id="ENSG00000152402">
    <property type="expression patterns" value="Expressed in Brodmann (1909) area 23 and 167 other cell types or tissues"/>
</dbReference>
<dbReference type="GO" id="GO:0005829">
    <property type="term" value="C:cytosol"/>
    <property type="evidence" value="ECO:0000304"/>
    <property type="project" value="Reactome"/>
</dbReference>
<dbReference type="GO" id="GO:0008074">
    <property type="term" value="C:guanylate cyclase complex, soluble"/>
    <property type="evidence" value="ECO:0000318"/>
    <property type="project" value="GO_Central"/>
</dbReference>
<dbReference type="GO" id="GO:0005525">
    <property type="term" value="F:GTP binding"/>
    <property type="evidence" value="ECO:0007669"/>
    <property type="project" value="UniProtKB-KW"/>
</dbReference>
<dbReference type="GO" id="GO:0004383">
    <property type="term" value="F:guanylate cyclase activity"/>
    <property type="evidence" value="ECO:0000318"/>
    <property type="project" value="GO_Central"/>
</dbReference>
<dbReference type="GO" id="GO:0020037">
    <property type="term" value="F:heme binding"/>
    <property type="evidence" value="ECO:0007669"/>
    <property type="project" value="InterPro"/>
</dbReference>
<dbReference type="GO" id="GO:0019934">
    <property type="term" value="P:cGMP-mediated signaling"/>
    <property type="evidence" value="ECO:0000318"/>
    <property type="project" value="GO_Central"/>
</dbReference>
<dbReference type="GO" id="GO:0007263">
    <property type="term" value="P:nitric oxide mediated signal transduction"/>
    <property type="evidence" value="ECO:0007669"/>
    <property type="project" value="Ensembl"/>
</dbReference>
<dbReference type="GO" id="GO:0010750">
    <property type="term" value="P:positive regulation of nitric oxide mediated signal transduction"/>
    <property type="evidence" value="ECO:0007669"/>
    <property type="project" value="Ensembl"/>
</dbReference>
<dbReference type="GO" id="GO:0070482">
    <property type="term" value="P:response to oxygen levels"/>
    <property type="evidence" value="ECO:0000318"/>
    <property type="project" value="GO_Central"/>
</dbReference>
<dbReference type="GO" id="GO:0007165">
    <property type="term" value="P:signal transduction"/>
    <property type="evidence" value="ECO:0000304"/>
    <property type="project" value="ProtInc"/>
</dbReference>
<dbReference type="CDD" id="cd07302">
    <property type="entry name" value="CHD"/>
    <property type="match status" value="1"/>
</dbReference>
<dbReference type="FunFam" id="3.90.1520.10:FF:000003">
    <property type="entry name" value="Guanylate cyclase soluble subunit alpha-2"/>
    <property type="match status" value="1"/>
</dbReference>
<dbReference type="FunFam" id="3.30.450.260:FF:000002">
    <property type="entry name" value="guanylate cyclase soluble subunit alpha-2"/>
    <property type="match status" value="1"/>
</dbReference>
<dbReference type="FunFam" id="3.30.70.1230:FF:000007">
    <property type="entry name" value="Guanylate cyclase soluble subunit alpha-3"/>
    <property type="match status" value="1"/>
</dbReference>
<dbReference type="Gene3D" id="6.10.250.780">
    <property type="match status" value="1"/>
</dbReference>
<dbReference type="Gene3D" id="3.90.1520.10">
    <property type="entry name" value="H-NOX domain"/>
    <property type="match status" value="1"/>
</dbReference>
<dbReference type="Gene3D" id="3.30.450.260">
    <property type="entry name" value="Haem NO binding associated domain"/>
    <property type="match status" value="1"/>
</dbReference>
<dbReference type="Gene3D" id="3.30.70.1230">
    <property type="entry name" value="Nucleotide cyclase"/>
    <property type="match status" value="1"/>
</dbReference>
<dbReference type="InterPro" id="IPR001054">
    <property type="entry name" value="A/G_cyclase"/>
</dbReference>
<dbReference type="InterPro" id="IPR018297">
    <property type="entry name" value="A/G_cyclase_CS"/>
</dbReference>
<dbReference type="InterPro" id="IPR038158">
    <property type="entry name" value="H-NOX_domain_sf"/>
</dbReference>
<dbReference type="InterPro" id="IPR011644">
    <property type="entry name" value="Heme_NO-bd"/>
</dbReference>
<dbReference type="InterPro" id="IPR011645">
    <property type="entry name" value="HNOB_dom_associated"/>
</dbReference>
<dbReference type="InterPro" id="IPR042463">
    <property type="entry name" value="HNOB_dom_associated_sf"/>
</dbReference>
<dbReference type="InterPro" id="IPR024096">
    <property type="entry name" value="NO_sig/Golgi_transp_ligand-bd"/>
</dbReference>
<dbReference type="InterPro" id="IPR029787">
    <property type="entry name" value="Nucleotide_cyclase"/>
</dbReference>
<dbReference type="PANTHER" id="PTHR45655:SF7">
    <property type="entry name" value="GUANYLATE CYCLASE SOLUBLE SUBUNIT ALPHA-2"/>
    <property type="match status" value="1"/>
</dbReference>
<dbReference type="PANTHER" id="PTHR45655">
    <property type="entry name" value="GUANYLATE CYCLASE SOLUBLE SUBUNIT BETA-2"/>
    <property type="match status" value="1"/>
</dbReference>
<dbReference type="Pfam" id="PF00211">
    <property type="entry name" value="Guanylate_cyc"/>
    <property type="match status" value="1"/>
</dbReference>
<dbReference type="Pfam" id="PF07700">
    <property type="entry name" value="HNOB"/>
    <property type="match status" value="1"/>
</dbReference>
<dbReference type="Pfam" id="PF07701">
    <property type="entry name" value="HNOBA"/>
    <property type="match status" value="1"/>
</dbReference>
<dbReference type="SMART" id="SM00044">
    <property type="entry name" value="CYCc"/>
    <property type="match status" value="1"/>
</dbReference>
<dbReference type="SUPFAM" id="SSF111126">
    <property type="entry name" value="Ligand-binding domain in the NO signalling and Golgi transport"/>
    <property type="match status" value="1"/>
</dbReference>
<dbReference type="SUPFAM" id="SSF55073">
    <property type="entry name" value="Nucleotide cyclase"/>
    <property type="match status" value="1"/>
</dbReference>
<dbReference type="PROSITE" id="PS00452">
    <property type="entry name" value="GUANYLATE_CYCLASE_1"/>
    <property type="match status" value="1"/>
</dbReference>
<dbReference type="PROSITE" id="PS50125">
    <property type="entry name" value="GUANYLATE_CYCLASE_2"/>
    <property type="match status" value="1"/>
</dbReference>
<proteinExistence type="evidence at protein level"/>
<reference key="1">
    <citation type="journal article" date="1991" name="FEBS Lett.">
        <title>Molecular cloning and expression of a new alpha-subunit of soluble guanylyl cyclase. Interchangeability of the alpha-subunits of the enzyme.</title>
        <authorList>
            <person name="Harteneck C."/>
            <person name="Wedel B."/>
            <person name="Koesling D."/>
            <person name="Malkewitz J."/>
            <person name="Boehme E."/>
            <person name="Schultz G."/>
        </authorList>
    </citation>
    <scope>NUCLEOTIDE SEQUENCE [MRNA]</scope>
</reference>
<reference key="2">
    <citation type="journal article" date="1995" name="J. Biol. Chem.">
        <title>A variant of the alpha 2 subunit of soluble guanylyl cyclase contains an insert homologous to a region within adenylyl cyclases and functions as a dominant negative protein.</title>
        <authorList>
            <person name="Behrends S."/>
            <person name="Harteneck C."/>
            <person name="Schultz G."/>
            <person name="Koesling D."/>
        </authorList>
    </citation>
    <scope>NUCLEOTIDE SEQUENCE [MRNA] (ISOFORM 2)</scope>
</reference>
<reference key="3">
    <citation type="journal article" date="2006" name="Nature">
        <title>Human chromosome 11 DNA sequence and analysis including novel gene identification.</title>
        <authorList>
            <person name="Taylor T.D."/>
            <person name="Noguchi H."/>
            <person name="Totoki Y."/>
            <person name="Toyoda A."/>
            <person name="Kuroki Y."/>
            <person name="Dewar K."/>
            <person name="Lloyd C."/>
            <person name="Itoh T."/>
            <person name="Takeda T."/>
            <person name="Kim D.-W."/>
            <person name="She X."/>
            <person name="Barlow K.F."/>
            <person name="Bloom T."/>
            <person name="Bruford E."/>
            <person name="Chang J.L."/>
            <person name="Cuomo C.A."/>
            <person name="Eichler E."/>
            <person name="FitzGerald M.G."/>
            <person name="Jaffe D.B."/>
            <person name="LaButti K."/>
            <person name="Nicol R."/>
            <person name="Park H.-S."/>
            <person name="Seaman C."/>
            <person name="Sougnez C."/>
            <person name="Yang X."/>
            <person name="Zimmer A.R."/>
            <person name="Zody M.C."/>
            <person name="Birren B.W."/>
            <person name="Nusbaum C."/>
            <person name="Fujiyama A."/>
            <person name="Hattori M."/>
            <person name="Rogers J."/>
            <person name="Lander E.S."/>
            <person name="Sakaki Y."/>
        </authorList>
    </citation>
    <scope>NUCLEOTIDE SEQUENCE [LARGE SCALE GENOMIC DNA]</scope>
</reference>
<reference key="4">
    <citation type="submission" date="2005-07" db="EMBL/GenBank/DDBJ databases">
        <authorList>
            <person name="Mural R.J."/>
            <person name="Istrail S."/>
            <person name="Sutton G.G."/>
            <person name="Florea L."/>
            <person name="Halpern A.L."/>
            <person name="Mobarry C.M."/>
            <person name="Lippert R."/>
            <person name="Walenz B."/>
            <person name="Shatkay H."/>
            <person name="Dew I."/>
            <person name="Miller J.R."/>
            <person name="Flanigan M.J."/>
            <person name="Edwards N.J."/>
            <person name="Bolanos R."/>
            <person name="Fasulo D."/>
            <person name="Halldorsson B.V."/>
            <person name="Hannenhalli S."/>
            <person name="Turner R."/>
            <person name="Yooseph S."/>
            <person name="Lu F."/>
            <person name="Nusskern D.R."/>
            <person name="Shue B.C."/>
            <person name="Zheng X.H."/>
            <person name="Zhong F."/>
            <person name="Delcher A.L."/>
            <person name="Huson D.H."/>
            <person name="Kravitz S.A."/>
            <person name="Mouchard L."/>
            <person name="Reinert K."/>
            <person name="Remington K.A."/>
            <person name="Clark A.G."/>
            <person name="Waterman M.S."/>
            <person name="Eichler E.E."/>
            <person name="Adams M.D."/>
            <person name="Hunkapiller M.W."/>
            <person name="Myers E.W."/>
            <person name="Venter J.C."/>
        </authorList>
    </citation>
    <scope>NUCLEOTIDE SEQUENCE [LARGE SCALE GENOMIC DNA]</scope>
</reference>
<reference key="5">
    <citation type="journal article" date="2004" name="Genome Res.">
        <title>The status, quality, and expansion of the NIH full-length cDNA project: the Mammalian Gene Collection (MGC).</title>
        <authorList>
            <consortium name="The MGC Project Team"/>
        </authorList>
    </citation>
    <scope>NUCLEOTIDE SEQUENCE [LARGE SCALE MRNA] (ISOFORMS 1 AND 3)</scope>
</reference>
<reference key="6">
    <citation type="journal article" date="2006" name="Science">
        <title>The consensus coding sequences of human breast and colorectal cancers.</title>
        <authorList>
            <person name="Sjoeblom T."/>
            <person name="Jones S."/>
            <person name="Wood L.D."/>
            <person name="Parsons D.W."/>
            <person name="Lin J."/>
            <person name="Barber T.D."/>
            <person name="Mandelker D."/>
            <person name="Leary R.J."/>
            <person name="Ptak J."/>
            <person name="Silliman N."/>
            <person name="Szabo S."/>
            <person name="Buckhaults P."/>
            <person name="Farrell C."/>
            <person name="Meeh P."/>
            <person name="Markowitz S.D."/>
            <person name="Willis J."/>
            <person name="Dawson D."/>
            <person name="Willson J.K.V."/>
            <person name="Gazdar A.F."/>
            <person name="Hartigan J."/>
            <person name="Wu L."/>
            <person name="Liu C."/>
            <person name="Parmigiani G."/>
            <person name="Park B.H."/>
            <person name="Bachman K.E."/>
            <person name="Papadopoulos N."/>
            <person name="Vogelstein B."/>
            <person name="Kinzler K.W."/>
            <person name="Velculescu V.E."/>
        </authorList>
    </citation>
    <scope>VARIANTS [LARGE SCALE ANALYSIS] VAL-681 AND THR-685</scope>
</reference>
<name>GCYA2_HUMAN</name>